<comment type="function">
    <text evidence="2">Required for efficient sporulation.</text>
</comment>
<comment type="subcellular location">
    <subcellularLocation>
        <location evidence="2">Prospore membrane</location>
        <topology evidence="4">Peripheral membrane protein</topology>
    </subcellularLocation>
</comment>
<comment type="induction">
    <text evidence="1">By PDR1 through its PDRE-like promoter element.</text>
</comment>
<comment type="PTM">
    <text evidence="2">Phosphorylated during meiosis. During meiosis, exists in both unphosphorylated and phosphorylated forms with the highest degree of phosphorylation occurring in mid-meiosis.</text>
</comment>
<comment type="disruption phenotype">
    <text evidence="2">Defective sporulation accompanied by the appearance of pseudohyphal-like projections.</text>
</comment>
<keyword id="KW-0472">Membrane</keyword>
<keyword id="KW-0597">Phosphoprotein</keyword>
<keyword id="KW-1185">Reference proteome</keyword>
<keyword id="KW-0749">Sporulation</keyword>
<evidence type="ECO:0000269" key="1">
    <source>
    </source>
</evidence>
<evidence type="ECO:0000269" key="2">
    <source>
    </source>
</evidence>
<evidence type="ECO:0000303" key="3">
    <source>
    </source>
</evidence>
<evidence type="ECO:0000305" key="4"/>
<evidence type="ECO:0000312" key="5">
    <source>
        <dbReference type="SGD" id="S000028425"/>
    </source>
</evidence>
<evidence type="ECO:0007744" key="6">
    <source>
    </source>
</evidence>
<sequence length="67" mass="7055">MVAFLELTSDVSQPFVIPSLSPVSQPSSRKNSDANVDDLNLAIANAALLDASASSRSHSRKNSLSLL</sequence>
<organism>
    <name type="scientific">Saccharomyces cerevisiae (strain ATCC 204508 / S288c)</name>
    <name type="common">Baker's yeast</name>
    <dbReference type="NCBI Taxonomy" id="559292"/>
    <lineage>
        <taxon>Eukaryota</taxon>
        <taxon>Fungi</taxon>
        <taxon>Dikarya</taxon>
        <taxon>Ascomycota</taxon>
        <taxon>Saccharomycotina</taxon>
        <taxon>Saccharomycetes</taxon>
        <taxon>Saccharomycetales</taxon>
        <taxon>Saccharomycetaceae</taxon>
        <taxon>Saccharomyces</taxon>
    </lineage>
</organism>
<feature type="chain" id="PRO_0000242699" description="Sporulation protein 24">
    <location>
        <begin position="1"/>
        <end position="67"/>
    </location>
</feature>
<feature type="modified residue" description="Phosphoserine" evidence="6">
    <location>
        <position position="24"/>
    </location>
</feature>
<feature type="modified residue" description="Phosphoserine" evidence="6">
    <location>
        <position position="32"/>
    </location>
</feature>
<protein>
    <recommendedName>
        <fullName evidence="3">Sporulation protein 24</fullName>
    </recommendedName>
</protein>
<accession>Q3E752</accession>
<accession>D6W447</accession>
<reference key="1">
    <citation type="journal article" date="1997" name="Nature">
        <title>The nucleotide sequence of Saccharomyces cerevisiae chromosome XVI.</title>
        <authorList>
            <person name="Bussey H."/>
            <person name="Storms R.K."/>
            <person name="Ahmed A."/>
            <person name="Albermann K."/>
            <person name="Allen E."/>
            <person name="Ansorge W."/>
            <person name="Araujo R."/>
            <person name="Aparicio A."/>
            <person name="Barrell B.G."/>
            <person name="Badcock K."/>
            <person name="Benes V."/>
            <person name="Botstein D."/>
            <person name="Bowman S."/>
            <person name="Brueckner M."/>
            <person name="Carpenter J."/>
            <person name="Cherry J.M."/>
            <person name="Chung E."/>
            <person name="Churcher C.M."/>
            <person name="Coster F."/>
            <person name="Davis K."/>
            <person name="Davis R.W."/>
            <person name="Dietrich F.S."/>
            <person name="Delius H."/>
            <person name="DiPaolo T."/>
            <person name="Dubois E."/>
            <person name="Duesterhoeft A."/>
            <person name="Duncan M."/>
            <person name="Floeth M."/>
            <person name="Fortin N."/>
            <person name="Friesen J.D."/>
            <person name="Fritz C."/>
            <person name="Goffeau A."/>
            <person name="Hall J."/>
            <person name="Hebling U."/>
            <person name="Heumann K."/>
            <person name="Hilbert H."/>
            <person name="Hillier L.W."/>
            <person name="Hunicke-Smith S."/>
            <person name="Hyman R.W."/>
            <person name="Johnston M."/>
            <person name="Kalman S."/>
            <person name="Kleine K."/>
            <person name="Komp C."/>
            <person name="Kurdi O."/>
            <person name="Lashkari D."/>
            <person name="Lew H."/>
            <person name="Lin A."/>
            <person name="Lin D."/>
            <person name="Louis E.J."/>
            <person name="Marathe R."/>
            <person name="Messenguy F."/>
            <person name="Mewes H.-W."/>
            <person name="Mirtipati S."/>
            <person name="Moestl D."/>
            <person name="Mueller-Auer S."/>
            <person name="Namath A."/>
            <person name="Nentwich U."/>
            <person name="Oefner P."/>
            <person name="Pearson D."/>
            <person name="Petel F.X."/>
            <person name="Pohl T.M."/>
            <person name="Purnelle B."/>
            <person name="Rajandream M.A."/>
            <person name="Rechmann S."/>
            <person name="Rieger M."/>
            <person name="Riles L."/>
            <person name="Roberts D."/>
            <person name="Schaefer M."/>
            <person name="Scharfe M."/>
            <person name="Scherens B."/>
            <person name="Schramm S."/>
            <person name="Schroeder M."/>
            <person name="Sdicu A.-M."/>
            <person name="Tettelin H."/>
            <person name="Urrestarazu L.A."/>
            <person name="Ushinsky S."/>
            <person name="Vierendeels F."/>
            <person name="Vissers S."/>
            <person name="Voss H."/>
            <person name="Walsh S.V."/>
            <person name="Wambutt R."/>
            <person name="Wang Y."/>
            <person name="Wedler E."/>
            <person name="Wedler H."/>
            <person name="Winnett E."/>
            <person name="Zhong W.-W."/>
            <person name="Zollner A."/>
            <person name="Vo D.H."/>
            <person name="Hani J."/>
        </authorList>
    </citation>
    <scope>NUCLEOTIDE SEQUENCE [LARGE SCALE GENOMIC DNA]</scope>
    <source>
        <strain>ATCC 204508 / S288c</strain>
    </source>
</reference>
<reference key="2">
    <citation type="journal article" date="2014" name="G3 (Bethesda)">
        <title>The reference genome sequence of Saccharomyces cerevisiae: Then and now.</title>
        <authorList>
            <person name="Engel S.R."/>
            <person name="Dietrich F.S."/>
            <person name="Fisk D.G."/>
            <person name="Binkley G."/>
            <person name="Balakrishnan R."/>
            <person name="Costanzo M.C."/>
            <person name="Dwight S.S."/>
            <person name="Hitz B.C."/>
            <person name="Karra K."/>
            <person name="Nash R.S."/>
            <person name="Weng S."/>
            <person name="Wong E.D."/>
            <person name="Lloyd P."/>
            <person name="Skrzypek M.S."/>
            <person name="Miyasato S.R."/>
            <person name="Simison M."/>
            <person name="Cherry J.M."/>
        </authorList>
    </citation>
    <scope>GENOME REANNOTATION</scope>
    <source>
        <strain>ATCC 204508 / S288c</strain>
    </source>
</reference>
<reference key="3">
    <citation type="journal article" date="2001" name="FEBS Lett.">
        <title>Differential display analysis of mutants for the transcription factor Pdr1p regulating multidrug resistance in the budding yeast.</title>
        <authorList>
            <person name="Miura F."/>
            <person name="Yada T."/>
            <person name="Nakai K."/>
            <person name="Sakaki Y."/>
            <person name="Ito T."/>
        </authorList>
    </citation>
    <scope>INDUCTION</scope>
</reference>
<reference key="4">
    <citation type="journal article" date="2008" name="Mol. Cell. Proteomics">
        <title>A multidimensional chromatography technology for in-depth phosphoproteome analysis.</title>
        <authorList>
            <person name="Albuquerque C.P."/>
            <person name="Smolka M.B."/>
            <person name="Payne S.H."/>
            <person name="Bafna V."/>
            <person name="Eng J."/>
            <person name="Zhou H."/>
        </authorList>
    </citation>
    <scope>PHOSPHORYLATION [LARGE SCALE ANALYSIS] AT SER-24 AND SER-32</scope>
    <scope>IDENTIFICATION BY MASS SPECTROMETRY [LARGE SCALE ANALYSIS]</scope>
</reference>
<reference key="5">
    <citation type="journal article" date="2012" name="Proc. Natl. Acad. Sci. U.S.A.">
        <title>N-terminal acetylome analyses and functional insights of the N-terminal acetyltransferase NatB.</title>
        <authorList>
            <person name="Van Damme P."/>
            <person name="Lasa M."/>
            <person name="Polevoda B."/>
            <person name="Gazquez C."/>
            <person name="Elosegui-Artola A."/>
            <person name="Kim D.S."/>
            <person name="De Juan-Pardo E."/>
            <person name="Demeyer K."/>
            <person name="Hole K."/>
            <person name="Larrea E."/>
            <person name="Timmerman E."/>
            <person name="Prieto J."/>
            <person name="Arnesen T."/>
            <person name="Sherman F."/>
            <person name="Gevaert K."/>
            <person name="Aldabe R."/>
        </authorList>
    </citation>
    <scope>IDENTIFICATION BY MASS SPECTROMETRY [LARGE SCALE ANALYSIS]</scope>
</reference>
<reference key="6">
    <citation type="journal article" date="2014" name="PLoS ONE">
        <title>SPO24 is a transcriptionally dynamic, small ORF-encoding locus required for efficient sporulation in Saccharomyces cerevisiae.</title>
        <authorList>
            <person name="Hurtado S."/>
            <person name="Kim Guisbert K.S."/>
            <person name="Sontheimer E.J."/>
        </authorList>
    </citation>
    <scope>FUNCTION</scope>
    <scope>SUBCELLULAR LOCATION</scope>
    <scope>PHOSPHORYLATION</scope>
    <scope>DISRUPTION PHENOTYPE</scope>
</reference>
<name>SPO24_YEAST</name>
<proteinExistence type="evidence at protein level"/>
<dbReference type="EMBL" id="Z68111">
    <property type="status" value="NOT_ANNOTATED_CDS"/>
    <property type="molecule type" value="Genomic_DNA"/>
</dbReference>
<dbReference type="EMBL" id="BK006949">
    <property type="protein sequence ID" value="DAA11463.1"/>
    <property type="molecule type" value="Genomic_DNA"/>
</dbReference>
<dbReference type="RefSeq" id="NP_690847.1">
    <property type="nucleotide sequence ID" value="NM_001184516.1"/>
</dbReference>
<dbReference type="BioGRID" id="36215">
    <property type="interactions" value="78"/>
</dbReference>
<dbReference type="FunCoup" id="Q3E752">
    <property type="interactions" value="49"/>
</dbReference>
<dbReference type="STRING" id="4932.YPR036W-A"/>
<dbReference type="iPTMnet" id="Q3E752"/>
<dbReference type="PaxDb" id="4932-YPR036W-A"/>
<dbReference type="PeptideAtlas" id="Q3E752"/>
<dbReference type="EnsemblFungi" id="YPR036W-A_mRNA">
    <property type="protein sequence ID" value="YPR036W-A"/>
    <property type="gene ID" value="YPR036W-A"/>
</dbReference>
<dbReference type="GeneID" id="856149"/>
<dbReference type="KEGG" id="sce:YPR036W-A"/>
<dbReference type="AGR" id="SGD:S000028425"/>
<dbReference type="SGD" id="S000028425">
    <property type="gene designation" value="SPO24"/>
</dbReference>
<dbReference type="VEuPathDB" id="FungiDB:YPR036W-A"/>
<dbReference type="eggNOG" id="ENOG502SF97">
    <property type="taxonomic scope" value="Eukaryota"/>
</dbReference>
<dbReference type="HOGENOM" id="CLU_195455_0_0_1"/>
<dbReference type="InParanoid" id="Q3E752"/>
<dbReference type="OMA" id="NSCASDY"/>
<dbReference type="OrthoDB" id="4068688at2759"/>
<dbReference type="BioCyc" id="YEAST:G3O-34361-MONOMER"/>
<dbReference type="BioGRID-ORCS" id="856149">
    <property type="hits" value="0 hits in 10 CRISPR screens"/>
</dbReference>
<dbReference type="ChiTaRS" id="SPO24">
    <property type="organism name" value="yeast"/>
</dbReference>
<dbReference type="PRO" id="PR:Q3E752"/>
<dbReference type="Proteomes" id="UP000002311">
    <property type="component" value="Chromosome XVI"/>
</dbReference>
<dbReference type="RNAct" id="Q3E752">
    <property type="molecule type" value="protein"/>
</dbReference>
<dbReference type="GO" id="GO:0005628">
    <property type="term" value="C:prospore membrane"/>
    <property type="evidence" value="ECO:0000314"/>
    <property type="project" value="SGD"/>
</dbReference>
<dbReference type="GO" id="GO:0030437">
    <property type="term" value="P:ascospore formation"/>
    <property type="evidence" value="ECO:0000315"/>
    <property type="project" value="SGD"/>
</dbReference>
<dbReference type="InterPro" id="IPR054415">
    <property type="entry name" value="SPO24"/>
</dbReference>
<dbReference type="Pfam" id="PF22044">
    <property type="entry name" value="SPO24"/>
    <property type="match status" value="1"/>
</dbReference>
<gene>
    <name evidence="3 5" type="primary">SPO24</name>
    <name evidence="5" type="ordered locus">YPR036W-A</name>
</gene>